<keyword id="KW-0012">Acyltransferase</keyword>
<keyword id="KW-0963">Cytoplasm</keyword>
<keyword id="KW-0408">Iron</keyword>
<keyword id="KW-0479">Metal-binding</keyword>
<keyword id="KW-1185">Reference proteome</keyword>
<keyword id="KW-0808">Transferase</keyword>
<keyword id="KW-0819">tRNA processing</keyword>
<proteinExistence type="inferred from homology"/>
<organism>
    <name type="scientific">Mesoplasma florum (strain ATCC 33453 / NBRC 100688 / NCTC 11704 / L1)</name>
    <name type="common">Acholeplasma florum</name>
    <dbReference type="NCBI Taxonomy" id="265311"/>
    <lineage>
        <taxon>Bacteria</taxon>
        <taxon>Bacillati</taxon>
        <taxon>Mycoplasmatota</taxon>
        <taxon>Mollicutes</taxon>
        <taxon>Entomoplasmatales</taxon>
        <taxon>Entomoplasmataceae</taxon>
        <taxon>Mesoplasma</taxon>
    </lineage>
</organism>
<sequence length="317" mass="34594">MKILAIESSCDEFSISIIDDGKILTNIISSQIDQHVNFGGVVPELAARLHLENISWVIKSALESSNTKIEEIDHVAYTEKPGLIGSLIIGKLVAETIASYIDKPLMPLHHIEGHIYGASIENEFVYPVLAMVVSGGHTQIEIVNSPNEFEVIGATLDDAIGECYDKVARVMGLGYPGGPKIDKLAQKGNKEAFIFPISKNDDSYDFSYSGLKTAVINIIHNLTQKGEEIPVADIAASFQYAATKIVEKKLEKAIIQFKPKTLTVAGGVSANSEIRNIIMSLGKKYNITNTFVPKMEYCTDNAAMIAKLAYEKLKSSN</sequence>
<accession>Q6F0Y1</accession>
<reference key="1">
    <citation type="submission" date="2004-06" db="EMBL/GenBank/DDBJ databases">
        <authorList>
            <person name="Birren B.W."/>
            <person name="Stange-Thomann N."/>
            <person name="Hafez N."/>
            <person name="DeCaprio D."/>
            <person name="Fisher S."/>
            <person name="Butler J."/>
            <person name="Elkins T."/>
            <person name="Kodira C.D."/>
            <person name="Major J."/>
            <person name="Wang S."/>
            <person name="Nicol R."/>
            <person name="Nusbaum C."/>
        </authorList>
    </citation>
    <scope>NUCLEOTIDE SEQUENCE [LARGE SCALE GENOMIC DNA]</scope>
    <source>
        <strain>ATCC 33453 / NBRC 100688 / NCTC 11704 / L1</strain>
    </source>
</reference>
<protein>
    <recommendedName>
        <fullName evidence="1">tRNA N6-adenosine threonylcarbamoyltransferase</fullName>
        <ecNumber evidence="1">2.3.1.234</ecNumber>
    </recommendedName>
    <alternativeName>
        <fullName evidence="1">N6-L-threonylcarbamoyladenine synthase</fullName>
        <shortName evidence="1">t(6)A synthase</shortName>
    </alternativeName>
    <alternativeName>
        <fullName evidence="1">t(6)A37 threonylcarbamoyladenosine biosynthesis protein TsaD</fullName>
    </alternativeName>
    <alternativeName>
        <fullName evidence="1">tRNA threonylcarbamoyladenosine biosynthesis protein TsaD</fullName>
    </alternativeName>
</protein>
<gene>
    <name evidence="1" type="primary">tsaD</name>
    <name type="synonym">gcp</name>
    <name type="ordered locus">Mfl484</name>
</gene>
<evidence type="ECO:0000255" key="1">
    <source>
        <dbReference type="HAMAP-Rule" id="MF_01445"/>
    </source>
</evidence>
<comment type="function">
    <text evidence="1">Required for the formation of a threonylcarbamoyl group on adenosine at position 37 (t(6)A37) in tRNAs that read codons beginning with adenine. Is involved in the transfer of the threonylcarbamoyl moiety of threonylcarbamoyl-AMP (TC-AMP) to the N6 group of A37, together with TsaE and TsaB. TsaD likely plays a direct catalytic role in this reaction.</text>
</comment>
<comment type="catalytic activity">
    <reaction evidence="1">
        <text>L-threonylcarbamoyladenylate + adenosine(37) in tRNA = N(6)-L-threonylcarbamoyladenosine(37) in tRNA + AMP + H(+)</text>
        <dbReference type="Rhea" id="RHEA:37059"/>
        <dbReference type="Rhea" id="RHEA-COMP:10162"/>
        <dbReference type="Rhea" id="RHEA-COMP:10163"/>
        <dbReference type="ChEBI" id="CHEBI:15378"/>
        <dbReference type="ChEBI" id="CHEBI:73682"/>
        <dbReference type="ChEBI" id="CHEBI:74411"/>
        <dbReference type="ChEBI" id="CHEBI:74418"/>
        <dbReference type="ChEBI" id="CHEBI:456215"/>
        <dbReference type="EC" id="2.3.1.234"/>
    </reaction>
</comment>
<comment type="cofactor">
    <cofactor evidence="1">
        <name>Fe(2+)</name>
        <dbReference type="ChEBI" id="CHEBI:29033"/>
    </cofactor>
    <text evidence="1">Binds 1 Fe(2+) ion per subunit.</text>
</comment>
<comment type="subcellular location">
    <subcellularLocation>
        <location evidence="1">Cytoplasm</location>
    </subcellularLocation>
</comment>
<comment type="similarity">
    <text evidence="1">Belongs to the KAE1 / TsaD family.</text>
</comment>
<name>TSAD_MESFL</name>
<dbReference type="EC" id="2.3.1.234" evidence="1"/>
<dbReference type="EMBL" id="AE017263">
    <property type="protein sequence ID" value="AAT75842.1"/>
    <property type="molecule type" value="Genomic_DNA"/>
</dbReference>
<dbReference type="RefSeq" id="WP_011183382.1">
    <property type="nucleotide sequence ID" value="NC_006055.1"/>
</dbReference>
<dbReference type="RefSeq" id="YP_053726.1">
    <property type="nucleotide sequence ID" value="NC_006055.1"/>
</dbReference>
<dbReference type="SMR" id="Q6F0Y1"/>
<dbReference type="STRING" id="265311.Mfl484"/>
<dbReference type="PaxDb" id="265311-Mfl484"/>
<dbReference type="EnsemblBacteria" id="AAT75842">
    <property type="protein sequence ID" value="AAT75842"/>
    <property type="gene ID" value="Mfl484"/>
</dbReference>
<dbReference type="GeneID" id="2898095"/>
<dbReference type="KEGG" id="mfl:Mfl484"/>
<dbReference type="PATRIC" id="fig|265311.5.peg.490"/>
<dbReference type="eggNOG" id="COG0533">
    <property type="taxonomic scope" value="Bacteria"/>
</dbReference>
<dbReference type="HOGENOM" id="CLU_023208_0_2_14"/>
<dbReference type="OrthoDB" id="9806197at2"/>
<dbReference type="Proteomes" id="UP000006647">
    <property type="component" value="Chromosome"/>
</dbReference>
<dbReference type="GO" id="GO:0005737">
    <property type="term" value="C:cytoplasm"/>
    <property type="evidence" value="ECO:0007669"/>
    <property type="project" value="UniProtKB-SubCell"/>
</dbReference>
<dbReference type="GO" id="GO:0005506">
    <property type="term" value="F:iron ion binding"/>
    <property type="evidence" value="ECO:0007669"/>
    <property type="project" value="UniProtKB-UniRule"/>
</dbReference>
<dbReference type="GO" id="GO:0061711">
    <property type="term" value="F:N(6)-L-threonylcarbamoyladenine synthase activity"/>
    <property type="evidence" value="ECO:0007669"/>
    <property type="project" value="UniProtKB-EC"/>
</dbReference>
<dbReference type="GO" id="GO:0002949">
    <property type="term" value="P:tRNA threonylcarbamoyladenosine modification"/>
    <property type="evidence" value="ECO:0007669"/>
    <property type="project" value="UniProtKB-UniRule"/>
</dbReference>
<dbReference type="CDD" id="cd24133">
    <property type="entry name" value="ASKHA_NBD_TsaD_bac"/>
    <property type="match status" value="1"/>
</dbReference>
<dbReference type="FunFam" id="3.30.420.40:FF:000012">
    <property type="entry name" value="tRNA N6-adenosine threonylcarbamoyltransferase"/>
    <property type="match status" value="1"/>
</dbReference>
<dbReference type="FunFam" id="3.30.420.40:FF:000040">
    <property type="entry name" value="tRNA N6-adenosine threonylcarbamoyltransferase"/>
    <property type="match status" value="1"/>
</dbReference>
<dbReference type="Gene3D" id="3.30.420.40">
    <property type="match status" value="2"/>
</dbReference>
<dbReference type="HAMAP" id="MF_01445">
    <property type="entry name" value="TsaD"/>
    <property type="match status" value="1"/>
</dbReference>
<dbReference type="InterPro" id="IPR043129">
    <property type="entry name" value="ATPase_NBD"/>
</dbReference>
<dbReference type="InterPro" id="IPR000905">
    <property type="entry name" value="Gcp-like_dom"/>
</dbReference>
<dbReference type="InterPro" id="IPR017861">
    <property type="entry name" value="KAE1/TsaD"/>
</dbReference>
<dbReference type="InterPro" id="IPR022450">
    <property type="entry name" value="TsaD"/>
</dbReference>
<dbReference type="NCBIfam" id="TIGR00329">
    <property type="entry name" value="gcp_kae1"/>
    <property type="match status" value="1"/>
</dbReference>
<dbReference type="NCBIfam" id="TIGR03723">
    <property type="entry name" value="T6A_TsaD_YgjD"/>
    <property type="match status" value="1"/>
</dbReference>
<dbReference type="PANTHER" id="PTHR11735">
    <property type="entry name" value="TRNA N6-ADENOSINE THREONYLCARBAMOYLTRANSFERASE"/>
    <property type="match status" value="1"/>
</dbReference>
<dbReference type="PANTHER" id="PTHR11735:SF6">
    <property type="entry name" value="TRNA N6-ADENOSINE THREONYLCARBAMOYLTRANSFERASE, MITOCHONDRIAL"/>
    <property type="match status" value="1"/>
</dbReference>
<dbReference type="Pfam" id="PF00814">
    <property type="entry name" value="TsaD"/>
    <property type="match status" value="1"/>
</dbReference>
<dbReference type="PRINTS" id="PR00789">
    <property type="entry name" value="OSIALOPTASE"/>
</dbReference>
<dbReference type="SUPFAM" id="SSF53067">
    <property type="entry name" value="Actin-like ATPase domain"/>
    <property type="match status" value="2"/>
</dbReference>
<feature type="chain" id="PRO_0000303421" description="tRNA N6-adenosine threonylcarbamoyltransferase">
    <location>
        <begin position="1"/>
        <end position="317"/>
    </location>
</feature>
<feature type="binding site" evidence="1">
    <location>
        <position position="110"/>
    </location>
    <ligand>
        <name>Fe cation</name>
        <dbReference type="ChEBI" id="CHEBI:24875"/>
    </ligand>
</feature>
<feature type="binding site" evidence="1">
    <location>
        <position position="114"/>
    </location>
    <ligand>
        <name>Fe cation</name>
        <dbReference type="ChEBI" id="CHEBI:24875"/>
    </ligand>
</feature>
<feature type="binding site" evidence="1">
    <location>
        <begin position="132"/>
        <end position="136"/>
    </location>
    <ligand>
        <name>substrate</name>
    </ligand>
</feature>
<feature type="binding site" evidence="1">
    <location>
        <position position="165"/>
    </location>
    <ligand>
        <name>substrate</name>
    </ligand>
</feature>
<feature type="binding site" evidence="1">
    <location>
        <position position="178"/>
    </location>
    <ligand>
        <name>substrate</name>
    </ligand>
</feature>
<feature type="binding site" evidence="1">
    <location>
        <position position="182"/>
    </location>
    <ligand>
        <name>substrate</name>
    </ligand>
</feature>
<feature type="binding site" evidence="1">
    <location>
        <position position="271"/>
    </location>
    <ligand>
        <name>substrate</name>
    </ligand>
</feature>
<feature type="binding site" evidence="1">
    <location>
        <position position="300"/>
    </location>
    <ligand>
        <name>Fe cation</name>
        <dbReference type="ChEBI" id="CHEBI:24875"/>
    </ligand>
</feature>